<comment type="function">
    <text evidence="1">Catalyzes the conversion of allantoin (5-ureidohydantoin) to allantoic acid by hydrolytic cleavage of the five-member hydantoin ring.</text>
</comment>
<comment type="catalytic activity">
    <reaction evidence="1">
        <text>(S)-allantoin + H2O = allantoate + H(+)</text>
        <dbReference type="Rhea" id="RHEA:17029"/>
        <dbReference type="ChEBI" id="CHEBI:15377"/>
        <dbReference type="ChEBI" id="CHEBI:15378"/>
        <dbReference type="ChEBI" id="CHEBI:15678"/>
        <dbReference type="ChEBI" id="CHEBI:17536"/>
        <dbReference type="EC" id="3.5.2.5"/>
    </reaction>
</comment>
<comment type="cofactor">
    <cofactor evidence="1">
        <name>Zn(2+)</name>
        <dbReference type="ChEBI" id="CHEBI:29105"/>
    </cofactor>
    <text evidence="1">Binds 2 Zn(2+) ions per subunit.</text>
</comment>
<comment type="pathway">
    <text evidence="1">Nitrogen metabolism; (S)-allantoin degradation; allantoate from (S)-allantoin: step 1/1.</text>
</comment>
<comment type="subunit">
    <text evidence="1">Homotetramer.</text>
</comment>
<comment type="PTM">
    <text evidence="1">Carboxylation allows a single lysine to coordinate two zinc ions.</text>
</comment>
<comment type="similarity">
    <text evidence="1">Belongs to the metallo-dependent hydrolases superfamily. Allantoinase family.</text>
</comment>
<accession>Q1RF23</accession>
<evidence type="ECO:0000255" key="1">
    <source>
        <dbReference type="HAMAP-Rule" id="MF_01645"/>
    </source>
</evidence>
<proteinExistence type="inferred from homology"/>
<sequence>MSFDLIIKNGTVILENEARVVDIAVKDGKIAAIGQDLGDAKDVMDASGLVVSPGMVDAHTHISEPGRSHWEGYETGTRAAAKGGITTMIEMPLNQLPATVDRASIELKFDAAKGKLTIDAAQLGGLVSYNIDRLHELDEVGVVGFKCFVATCGDRGIDNDFRDVNDWQFFKGAQKLGELGQPVLVHCENALICDALGEEAKREGRVTAHDYVASRPVFTEVEAIRRVLYLAKVAGCRLHVCHVSSPEGVEEVTRARQEGQDVTCESCPHYFVLDTDQFEEIGTLAKCSPPIRDLENQKGMWEKLFNGEIDCLVSDHSPCPPEMKAGNIMKAWGGIAGLQSCMDVMFDEAVQKRGMSLPMFGKLMATNAADIFGLQQKGRIAPGKDADFVFIQPNSSYVLTNDDLEYRHKVSPYVGRTIGARITKTILRGDVIYDIEQGFPVAPKGQFILKHQQ</sequence>
<reference key="1">
    <citation type="journal article" date="2006" name="Proc. Natl. Acad. Sci. U.S.A.">
        <title>Identification of genes subject to positive selection in uropathogenic strains of Escherichia coli: a comparative genomics approach.</title>
        <authorList>
            <person name="Chen S.L."/>
            <person name="Hung C.-S."/>
            <person name="Xu J."/>
            <person name="Reigstad C.S."/>
            <person name="Magrini V."/>
            <person name="Sabo A."/>
            <person name="Blasiar D."/>
            <person name="Bieri T."/>
            <person name="Meyer R.R."/>
            <person name="Ozersky P."/>
            <person name="Armstrong J.R."/>
            <person name="Fulton R.S."/>
            <person name="Latreille J.P."/>
            <person name="Spieth J."/>
            <person name="Hooton T.M."/>
            <person name="Mardis E.R."/>
            <person name="Hultgren S.J."/>
            <person name="Gordon J.I."/>
        </authorList>
    </citation>
    <scope>NUCLEOTIDE SEQUENCE [LARGE SCALE GENOMIC DNA]</scope>
    <source>
        <strain>UTI89 / UPEC</strain>
    </source>
</reference>
<keyword id="KW-0378">Hydrolase</keyword>
<keyword id="KW-0479">Metal-binding</keyword>
<keyword id="KW-0659">Purine metabolism</keyword>
<keyword id="KW-0862">Zinc</keyword>
<feature type="chain" id="PRO_0000317675" description="Allantoinase">
    <location>
        <begin position="1"/>
        <end position="453"/>
    </location>
</feature>
<feature type="binding site" evidence="1">
    <location>
        <position position="59"/>
    </location>
    <ligand>
        <name>Zn(2+)</name>
        <dbReference type="ChEBI" id="CHEBI:29105"/>
        <label>1</label>
    </ligand>
</feature>
<feature type="binding site" evidence="1">
    <location>
        <position position="61"/>
    </location>
    <ligand>
        <name>Zn(2+)</name>
        <dbReference type="ChEBI" id="CHEBI:29105"/>
        <label>1</label>
    </ligand>
</feature>
<feature type="binding site" description="via carbamate group" evidence="1">
    <location>
        <position position="146"/>
    </location>
    <ligand>
        <name>Zn(2+)</name>
        <dbReference type="ChEBI" id="CHEBI:29105"/>
        <label>1</label>
    </ligand>
</feature>
<feature type="binding site" description="via carbamate group" evidence="1">
    <location>
        <position position="146"/>
    </location>
    <ligand>
        <name>Zn(2+)</name>
        <dbReference type="ChEBI" id="CHEBI:29105"/>
        <label>2</label>
    </ligand>
</feature>
<feature type="binding site" evidence="1">
    <location>
        <position position="186"/>
    </location>
    <ligand>
        <name>Zn(2+)</name>
        <dbReference type="ChEBI" id="CHEBI:29105"/>
        <label>2</label>
    </ligand>
</feature>
<feature type="binding site" evidence="1">
    <location>
        <position position="242"/>
    </location>
    <ligand>
        <name>Zn(2+)</name>
        <dbReference type="ChEBI" id="CHEBI:29105"/>
        <label>2</label>
    </ligand>
</feature>
<feature type="binding site" evidence="1">
    <location>
        <position position="315"/>
    </location>
    <ligand>
        <name>Zn(2+)</name>
        <dbReference type="ChEBI" id="CHEBI:29105"/>
        <label>1</label>
    </ligand>
</feature>
<feature type="modified residue" description="N6-carboxylysine" evidence="1">
    <location>
        <position position="146"/>
    </location>
</feature>
<name>ALLB_ECOUT</name>
<organism>
    <name type="scientific">Escherichia coli (strain UTI89 / UPEC)</name>
    <dbReference type="NCBI Taxonomy" id="364106"/>
    <lineage>
        <taxon>Bacteria</taxon>
        <taxon>Pseudomonadati</taxon>
        <taxon>Pseudomonadota</taxon>
        <taxon>Gammaproteobacteria</taxon>
        <taxon>Enterobacterales</taxon>
        <taxon>Enterobacteriaceae</taxon>
        <taxon>Escherichia</taxon>
    </lineage>
</organism>
<gene>
    <name evidence="1" type="primary">allB</name>
    <name type="synonym">ybbX</name>
    <name type="ordered locus">UTI89_C0540</name>
</gene>
<dbReference type="EC" id="3.5.2.5" evidence="1"/>
<dbReference type="EMBL" id="CP000243">
    <property type="protein sequence ID" value="ABE06041.1"/>
    <property type="molecule type" value="Genomic_DNA"/>
</dbReference>
<dbReference type="RefSeq" id="WP_000006873.1">
    <property type="nucleotide sequence ID" value="NZ_CP064825.1"/>
</dbReference>
<dbReference type="SMR" id="Q1RF23"/>
<dbReference type="KEGG" id="eci:UTI89_C0540"/>
<dbReference type="HOGENOM" id="CLU_015572_4_2_6"/>
<dbReference type="UniPathway" id="UPA00395">
    <property type="reaction ID" value="UER00653"/>
</dbReference>
<dbReference type="Proteomes" id="UP000001952">
    <property type="component" value="Chromosome"/>
</dbReference>
<dbReference type="GO" id="GO:0005737">
    <property type="term" value="C:cytoplasm"/>
    <property type="evidence" value="ECO:0007669"/>
    <property type="project" value="TreeGrafter"/>
</dbReference>
<dbReference type="GO" id="GO:0004038">
    <property type="term" value="F:allantoinase activity"/>
    <property type="evidence" value="ECO:0007669"/>
    <property type="project" value="UniProtKB-UniRule"/>
</dbReference>
<dbReference type="GO" id="GO:0050897">
    <property type="term" value="F:cobalt ion binding"/>
    <property type="evidence" value="ECO:0007669"/>
    <property type="project" value="InterPro"/>
</dbReference>
<dbReference type="GO" id="GO:0008270">
    <property type="term" value="F:zinc ion binding"/>
    <property type="evidence" value="ECO:0007669"/>
    <property type="project" value="InterPro"/>
</dbReference>
<dbReference type="GO" id="GO:0000256">
    <property type="term" value="P:allantoin catabolic process"/>
    <property type="evidence" value="ECO:0007669"/>
    <property type="project" value="UniProtKB-UniRule"/>
</dbReference>
<dbReference type="GO" id="GO:0006145">
    <property type="term" value="P:purine nucleobase catabolic process"/>
    <property type="evidence" value="ECO:0007669"/>
    <property type="project" value="TreeGrafter"/>
</dbReference>
<dbReference type="CDD" id="cd01315">
    <property type="entry name" value="L-HYD_ALN"/>
    <property type="match status" value="1"/>
</dbReference>
<dbReference type="FunFam" id="3.20.20.140:FF:000013">
    <property type="entry name" value="Allantoinase"/>
    <property type="match status" value="1"/>
</dbReference>
<dbReference type="Gene3D" id="3.20.20.140">
    <property type="entry name" value="Metal-dependent hydrolases"/>
    <property type="match status" value="1"/>
</dbReference>
<dbReference type="Gene3D" id="2.30.40.10">
    <property type="entry name" value="Urease, subunit C, domain 1"/>
    <property type="match status" value="1"/>
</dbReference>
<dbReference type="HAMAP" id="MF_01645">
    <property type="entry name" value="Hydantoinase"/>
    <property type="match status" value="1"/>
</dbReference>
<dbReference type="InterPro" id="IPR017593">
    <property type="entry name" value="Allantoinase"/>
</dbReference>
<dbReference type="InterPro" id="IPR047604">
    <property type="entry name" value="Allantoinase_bact"/>
</dbReference>
<dbReference type="InterPro" id="IPR006680">
    <property type="entry name" value="Amidohydro-rel"/>
</dbReference>
<dbReference type="InterPro" id="IPR050138">
    <property type="entry name" value="DHOase/Allantoinase_Hydrolase"/>
</dbReference>
<dbReference type="InterPro" id="IPR011059">
    <property type="entry name" value="Metal-dep_hydrolase_composite"/>
</dbReference>
<dbReference type="InterPro" id="IPR032466">
    <property type="entry name" value="Metal_Hydrolase"/>
</dbReference>
<dbReference type="NCBIfam" id="TIGR03178">
    <property type="entry name" value="allantoinase"/>
    <property type="match status" value="1"/>
</dbReference>
<dbReference type="NCBIfam" id="NF005960">
    <property type="entry name" value="PRK08044.1"/>
    <property type="match status" value="1"/>
</dbReference>
<dbReference type="PANTHER" id="PTHR43668">
    <property type="entry name" value="ALLANTOINASE"/>
    <property type="match status" value="1"/>
</dbReference>
<dbReference type="PANTHER" id="PTHR43668:SF4">
    <property type="entry name" value="ALLANTOINASE"/>
    <property type="match status" value="1"/>
</dbReference>
<dbReference type="Pfam" id="PF01979">
    <property type="entry name" value="Amidohydro_1"/>
    <property type="match status" value="1"/>
</dbReference>
<dbReference type="SUPFAM" id="SSF51338">
    <property type="entry name" value="Composite domain of metallo-dependent hydrolases"/>
    <property type="match status" value="1"/>
</dbReference>
<dbReference type="SUPFAM" id="SSF51556">
    <property type="entry name" value="Metallo-dependent hydrolases"/>
    <property type="match status" value="1"/>
</dbReference>
<protein>
    <recommendedName>
        <fullName evidence="1">Allantoinase</fullName>
        <ecNumber evidence="1">3.5.2.5</ecNumber>
    </recommendedName>
    <alternativeName>
        <fullName evidence="1">Allantoin-utilizing enzyme</fullName>
    </alternativeName>
</protein>